<comment type="function">
    <text evidence="1">Can catalyze the hydrolysis of ATP in the presence of single-stranded DNA, the ATP-dependent uptake of single-stranded DNA by duplex DNA, and the ATP-dependent hybridization of homologous single-stranded DNAs. It interacts with LexA causing its activation and leading to its autocatalytic cleavage.</text>
</comment>
<comment type="subcellular location">
    <subcellularLocation>
        <location evidence="1">Cytoplasm</location>
    </subcellularLocation>
</comment>
<comment type="similarity">
    <text evidence="1">Belongs to the RecA family.</text>
</comment>
<reference key="1">
    <citation type="journal article" date="2009" name="J. Bacteriol.">
        <title>The complete genome sequence of Helicobacter pylori strain G27.</title>
        <authorList>
            <person name="Baltrus D.A."/>
            <person name="Amieva M.R."/>
            <person name="Covacci A."/>
            <person name="Lowe T.M."/>
            <person name="Merrell D.S."/>
            <person name="Ottemann K.M."/>
            <person name="Stein M."/>
            <person name="Salama N.R."/>
            <person name="Guillemin K."/>
        </authorList>
    </citation>
    <scope>NUCLEOTIDE SEQUENCE [LARGE SCALE GENOMIC DNA]</scope>
    <source>
        <strain>G27</strain>
    </source>
</reference>
<proteinExistence type="inferred from homology"/>
<accession>B5Z9S8</accession>
<organism>
    <name type="scientific">Helicobacter pylori (strain G27)</name>
    <dbReference type="NCBI Taxonomy" id="563041"/>
    <lineage>
        <taxon>Bacteria</taxon>
        <taxon>Pseudomonadati</taxon>
        <taxon>Campylobacterota</taxon>
        <taxon>Epsilonproteobacteria</taxon>
        <taxon>Campylobacterales</taxon>
        <taxon>Helicobacteraceae</taxon>
        <taxon>Helicobacter</taxon>
    </lineage>
</organism>
<protein>
    <recommendedName>
        <fullName evidence="1">Protein RecA</fullName>
    </recommendedName>
    <alternativeName>
        <fullName evidence="1">Recombinase A</fullName>
    </alternativeName>
</protein>
<sequence>MAIDEDKQKAISLAIKQIDKVFGKGALVRLGDKQVEKIDAISTGSLGLDLALGIGGVPKGRIIEIYGPESSGKTTLSLHIIAECQKNGGVCAFIDAEHALDVHYAKRLGVDTQNLLVSQPDTGEQALEILETITRSGGIDLVVVDSVAALTPKAEIDGDMGDQHVGLQARLMSHALRKITGVLHKMNTTLIFINQIRMKIGMMGYGSPETTTGGNALKFYASVRIDIRRIASLKQNEQHIGNRAKAKVVKNKVAPPFREAEFDIMFGEGISKEGEIIDYGVKLDIVDKSGAWLSYQDKKLGQGRENAKALLKEDKALADEITLKIKESIGSNEEIMPLPDEPLEEME</sequence>
<gene>
    <name evidence="1" type="primary">recA</name>
    <name type="ordered locus">HPG27_140</name>
</gene>
<evidence type="ECO:0000255" key="1">
    <source>
        <dbReference type="HAMAP-Rule" id="MF_00268"/>
    </source>
</evidence>
<feature type="chain" id="PRO_1000114339" description="Protein RecA">
    <location>
        <begin position="1"/>
        <end position="347"/>
    </location>
</feature>
<feature type="binding site" evidence="1">
    <location>
        <begin position="67"/>
        <end position="74"/>
    </location>
    <ligand>
        <name>ATP</name>
        <dbReference type="ChEBI" id="CHEBI:30616"/>
    </ligand>
</feature>
<dbReference type="EMBL" id="CP001173">
    <property type="protein sequence ID" value="ACI26908.1"/>
    <property type="molecule type" value="Genomic_DNA"/>
</dbReference>
<dbReference type="RefSeq" id="WP_000952106.1">
    <property type="nucleotide sequence ID" value="NC_011333.1"/>
</dbReference>
<dbReference type="SMR" id="B5Z9S8"/>
<dbReference type="KEGG" id="hpg:HPG27_140"/>
<dbReference type="HOGENOM" id="CLU_040469_1_2_7"/>
<dbReference type="Proteomes" id="UP000001735">
    <property type="component" value="Chromosome"/>
</dbReference>
<dbReference type="GO" id="GO:0005829">
    <property type="term" value="C:cytosol"/>
    <property type="evidence" value="ECO:0007669"/>
    <property type="project" value="TreeGrafter"/>
</dbReference>
<dbReference type="GO" id="GO:0005524">
    <property type="term" value="F:ATP binding"/>
    <property type="evidence" value="ECO:0007669"/>
    <property type="project" value="UniProtKB-UniRule"/>
</dbReference>
<dbReference type="GO" id="GO:0016887">
    <property type="term" value="F:ATP hydrolysis activity"/>
    <property type="evidence" value="ECO:0007669"/>
    <property type="project" value="InterPro"/>
</dbReference>
<dbReference type="GO" id="GO:0140664">
    <property type="term" value="F:ATP-dependent DNA damage sensor activity"/>
    <property type="evidence" value="ECO:0007669"/>
    <property type="project" value="InterPro"/>
</dbReference>
<dbReference type="GO" id="GO:0003684">
    <property type="term" value="F:damaged DNA binding"/>
    <property type="evidence" value="ECO:0007669"/>
    <property type="project" value="UniProtKB-UniRule"/>
</dbReference>
<dbReference type="GO" id="GO:0003697">
    <property type="term" value="F:single-stranded DNA binding"/>
    <property type="evidence" value="ECO:0007669"/>
    <property type="project" value="UniProtKB-UniRule"/>
</dbReference>
<dbReference type="GO" id="GO:0006310">
    <property type="term" value="P:DNA recombination"/>
    <property type="evidence" value="ECO:0007669"/>
    <property type="project" value="UniProtKB-UniRule"/>
</dbReference>
<dbReference type="GO" id="GO:0006281">
    <property type="term" value="P:DNA repair"/>
    <property type="evidence" value="ECO:0007669"/>
    <property type="project" value="UniProtKB-UniRule"/>
</dbReference>
<dbReference type="GO" id="GO:0009432">
    <property type="term" value="P:SOS response"/>
    <property type="evidence" value="ECO:0007669"/>
    <property type="project" value="UniProtKB-UniRule"/>
</dbReference>
<dbReference type="CDD" id="cd00983">
    <property type="entry name" value="RecA"/>
    <property type="match status" value="1"/>
</dbReference>
<dbReference type="FunFam" id="3.40.50.300:FF:000087">
    <property type="entry name" value="Recombinase RecA"/>
    <property type="match status" value="1"/>
</dbReference>
<dbReference type="Gene3D" id="3.40.50.300">
    <property type="entry name" value="P-loop containing nucleotide triphosphate hydrolases"/>
    <property type="match status" value="1"/>
</dbReference>
<dbReference type="HAMAP" id="MF_00268">
    <property type="entry name" value="RecA"/>
    <property type="match status" value="1"/>
</dbReference>
<dbReference type="InterPro" id="IPR003593">
    <property type="entry name" value="AAA+_ATPase"/>
</dbReference>
<dbReference type="InterPro" id="IPR013765">
    <property type="entry name" value="DNA_recomb/repair_RecA"/>
</dbReference>
<dbReference type="InterPro" id="IPR020584">
    <property type="entry name" value="DNA_recomb/repair_RecA_CS"/>
</dbReference>
<dbReference type="InterPro" id="IPR027417">
    <property type="entry name" value="P-loop_NTPase"/>
</dbReference>
<dbReference type="InterPro" id="IPR049261">
    <property type="entry name" value="RecA-like_C"/>
</dbReference>
<dbReference type="InterPro" id="IPR049428">
    <property type="entry name" value="RecA-like_N"/>
</dbReference>
<dbReference type="InterPro" id="IPR020588">
    <property type="entry name" value="RecA_ATP-bd"/>
</dbReference>
<dbReference type="InterPro" id="IPR023400">
    <property type="entry name" value="RecA_C_sf"/>
</dbReference>
<dbReference type="InterPro" id="IPR020587">
    <property type="entry name" value="RecA_monomer-monomer_interface"/>
</dbReference>
<dbReference type="NCBIfam" id="TIGR02012">
    <property type="entry name" value="tigrfam_recA"/>
    <property type="match status" value="1"/>
</dbReference>
<dbReference type="PANTHER" id="PTHR45900:SF1">
    <property type="entry name" value="MITOCHONDRIAL DNA REPAIR PROTEIN RECA HOMOLOG-RELATED"/>
    <property type="match status" value="1"/>
</dbReference>
<dbReference type="PANTHER" id="PTHR45900">
    <property type="entry name" value="RECA"/>
    <property type="match status" value="1"/>
</dbReference>
<dbReference type="Pfam" id="PF00154">
    <property type="entry name" value="RecA"/>
    <property type="match status" value="1"/>
</dbReference>
<dbReference type="Pfam" id="PF21096">
    <property type="entry name" value="RecA_C"/>
    <property type="match status" value="1"/>
</dbReference>
<dbReference type="PRINTS" id="PR00142">
    <property type="entry name" value="RECA"/>
</dbReference>
<dbReference type="SMART" id="SM00382">
    <property type="entry name" value="AAA"/>
    <property type="match status" value="1"/>
</dbReference>
<dbReference type="SUPFAM" id="SSF52540">
    <property type="entry name" value="P-loop containing nucleoside triphosphate hydrolases"/>
    <property type="match status" value="1"/>
</dbReference>
<dbReference type="SUPFAM" id="SSF54752">
    <property type="entry name" value="RecA protein, C-terminal domain"/>
    <property type="match status" value="1"/>
</dbReference>
<dbReference type="PROSITE" id="PS00321">
    <property type="entry name" value="RECA_1"/>
    <property type="match status" value="1"/>
</dbReference>
<dbReference type="PROSITE" id="PS50162">
    <property type="entry name" value="RECA_2"/>
    <property type="match status" value="1"/>
</dbReference>
<dbReference type="PROSITE" id="PS50163">
    <property type="entry name" value="RECA_3"/>
    <property type="match status" value="1"/>
</dbReference>
<keyword id="KW-0067">ATP-binding</keyword>
<keyword id="KW-0963">Cytoplasm</keyword>
<keyword id="KW-0227">DNA damage</keyword>
<keyword id="KW-0233">DNA recombination</keyword>
<keyword id="KW-0234">DNA repair</keyword>
<keyword id="KW-0238">DNA-binding</keyword>
<keyword id="KW-0547">Nucleotide-binding</keyword>
<keyword id="KW-1185">Reference proteome</keyword>
<keyword id="KW-0742">SOS response</keyword>
<name>RECA_HELPG</name>